<protein>
    <recommendedName>
        <fullName evidence="1">Ribulose bisphosphate carboxylase large chain</fullName>
        <shortName evidence="1">RuBisCO large subunit</shortName>
        <ecNumber evidence="1">4.1.1.39</ecNumber>
    </recommendedName>
</protein>
<evidence type="ECO:0000255" key="1">
    <source>
        <dbReference type="HAMAP-Rule" id="MF_01338"/>
    </source>
</evidence>
<gene>
    <name evidence="1" type="primary">rbcL</name>
</gene>
<feature type="chain" id="PRO_0000062569" description="Ribulose bisphosphate carboxylase large chain">
    <location>
        <begin position="1" status="less than"/>
        <end position="440" status="greater than"/>
    </location>
</feature>
<feature type="active site" description="Proton acceptor" evidence="1">
    <location>
        <position position="165"/>
    </location>
</feature>
<feature type="active site" description="Proton acceptor" evidence="1">
    <location>
        <position position="284"/>
    </location>
</feature>
<feature type="binding site" description="in homodimeric partner" evidence="1">
    <location>
        <position position="113"/>
    </location>
    <ligand>
        <name>substrate</name>
    </ligand>
</feature>
<feature type="binding site" evidence="1">
    <location>
        <position position="163"/>
    </location>
    <ligand>
        <name>substrate</name>
    </ligand>
</feature>
<feature type="binding site" evidence="1">
    <location>
        <position position="167"/>
    </location>
    <ligand>
        <name>substrate</name>
    </ligand>
</feature>
<feature type="binding site" description="via carbamate group" evidence="1">
    <location>
        <position position="191"/>
    </location>
    <ligand>
        <name>Mg(2+)</name>
        <dbReference type="ChEBI" id="CHEBI:18420"/>
    </ligand>
</feature>
<feature type="binding site" evidence="1">
    <location>
        <position position="193"/>
    </location>
    <ligand>
        <name>Mg(2+)</name>
        <dbReference type="ChEBI" id="CHEBI:18420"/>
    </ligand>
</feature>
<feature type="binding site" evidence="1">
    <location>
        <position position="194"/>
    </location>
    <ligand>
        <name>Mg(2+)</name>
        <dbReference type="ChEBI" id="CHEBI:18420"/>
    </ligand>
</feature>
<feature type="binding site" evidence="1">
    <location>
        <position position="285"/>
    </location>
    <ligand>
        <name>substrate</name>
    </ligand>
</feature>
<feature type="binding site" evidence="1">
    <location>
        <position position="317"/>
    </location>
    <ligand>
        <name>substrate</name>
    </ligand>
</feature>
<feature type="binding site" evidence="1">
    <location>
        <position position="369"/>
    </location>
    <ligand>
        <name>substrate</name>
    </ligand>
</feature>
<feature type="site" description="Transition state stabilizer" evidence="1">
    <location>
        <position position="324"/>
    </location>
</feature>
<feature type="modified residue" description="N6,N6,N6-trimethyllysine" evidence="1">
    <location>
        <position position="4"/>
    </location>
</feature>
<feature type="modified residue" description="N6-carboxylysine" evidence="1">
    <location>
        <position position="191"/>
    </location>
</feature>
<feature type="disulfide bond" description="Interchain; in linked form" evidence="1">
    <location>
        <position position="237"/>
    </location>
</feature>
<feature type="non-terminal residue">
    <location>
        <position position="1"/>
    </location>
</feature>
<feature type="non-terminal residue">
    <location>
        <position position="440"/>
    </location>
</feature>
<comment type="function">
    <text evidence="1">RuBisCO catalyzes two reactions: the carboxylation of D-ribulose 1,5-bisphosphate, the primary event in carbon dioxide fixation, as well as the oxidative fragmentation of the pentose substrate in the photorespiration process. Both reactions occur simultaneously and in competition at the same active site.</text>
</comment>
<comment type="catalytic activity">
    <reaction evidence="1">
        <text>2 (2R)-3-phosphoglycerate + 2 H(+) = D-ribulose 1,5-bisphosphate + CO2 + H2O</text>
        <dbReference type="Rhea" id="RHEA:23124"/>
        <dbReference type="ChEBI" id="CHEBI:15377"/>
        <dbReference type="ChEBI" id="CHEBI:15378"/>
        <dbReference type="ChEBI" id="CHEBI:16526"/>
        <dbReference type="ChEBI" id="CHEBI:57870"/>
        <dbReference type="ChEBI" id="CHEBI:58272"/>
        <dbReference type="EC" id="4.1.1.39"/>
    </reaction>
</comment>
<comment type="catalytic activity">
    <reaction evidence="1">
        <text>D-ribulose 1,5-bisphosphate + O2 = 2-phosphoglycolate + (2R)-3-phosphoglycerate + 2 H(+)</text>
        <dbReference type="Rhea" id="RHEA:36631"/>
        <dbReference type="ChEBI" id="CHEBI:15378"/>
        <dbReference type="ChEBI" id="CHEBI:15379"/>
        <dbReference type="ChEBI" id="CHEBI:57870"/>
        <dbReference type="ChEBI" id="CHEBI:58033"/>
        <dbReference type="ChEBI" id="CHEBI:58272"/>
    </reaction>
</comment>
<comment type="cofactor">
    <cofactor evidence="1">
        <name>Mg(2+)</name>
        <dbReference type="ChEBI" id="CHEBI:18420"/>
    </cofactor>
    <text evidence="1">Binds 1 Mg(2+) ion per subunit.</text>
</comment>
<comment type="subunit">
    <text evidence="1">Heterohexadecamer of 8 large chains and 8 small chains; disulfide-linked. The disulfide link is formed within the large subunit homodimers.</text>
</comment>
<comment type="subcellular location">
    <subcellularLocation>
        <location>Plastid</location>
        <location>Chloroplast</location>
    </subcellularLocation>
</comment>
<comment type="PTM">
    <text evidence="1">The disulfide bond which can form in the large chain dimeric partners within the hexadecamer appears to be associated with oxidative stress and protein turnover.</text>
</comment>
<comment type="miscellaneous">
    <text evidence="1">The basic functional RuBisCO is composed of a large chain homodimer in a 'head-to-tail' conformation. In form I RuBisCO this homodimer is arranged in a barrel-like tetramer with the small subunits forming a tetrameric 'cap' on each end of the 'barrel'.</text>
</comment>
<comment type="similarity">
    <text evidence="1">Belongs to the RuBisCO large chain family. Type I subfamily.</text>
</comment>
<geneLocation type="chloroplast"/>
<organism>
    <name type="scientific">Polystichum munitum</name>
    <name type="common">Western sword-fern</name>
    <name type="synonym">Aspidium munitum</name>
    <dbReference type="NCBI Taxonomy" id="3279"/>
    <lineage>
        <taxon>Eukaryota</taxon>
        <taxon>Viridiplantae</taxon>
        <taxon>Streptophyta</taxon>
        <taxon>Embryophyta</taxon>
        <taxon>Tracheophyta</taxon>
        <taxon>Polypodiopsida</taxon>
        <taxon>Polypodiidae</taxon>
        <taxon>Polypodiales</taxon>
        <taxon>Polypodiineae</taxon>
        <taxon>Dryopteridaceae</taxon>
        <taxon>Dryopteridoideae</taxon>
        <taxon>Polystichum</taxon>
    </lineage>
</organism>
<keyword id="KW-0113">Calvin cycle</keyword>
<keyword id="KW-0120">Carbon dioxide fixation</keyword>
<keyword id="KW-0150">Chloroplast</keyword>
<keyword id="KW-1015">Disulfide bond</keyword>
<keyword id="KW-0456">Lyase</keyword>
<keyword id="KW-0460">Magnesium</keyword>
<keyword id="KW-0479">Metal-binding</keyword>
<keyword id="KW-0488">Methylation</keyword>
<keyword id="KW-0503">Monooxygenase</keyword>
<keyword id="KW-0560">Oxidoreductase</keyword>
<keyword id="KW-0601">Photorespiration</keyword>
<keyword id="KW-0602">Photosynthesis</keyword>
<keyword id="KW-0934">Plastid</keyword>
<dbReference type="EC" id="4.1.1.39" evidence="1"/>
<dbReference type="EMBL" id="U05938">
    <property type="protein sequence ID" value="AAC48963.1"/>
    <property type="molecule type" value="Genomic_DNA"/>
</dbReference>
<dbReference type="GO" id="GO:0009507">
    <property type="term" value="C:chloroplast"/>
    <property type="evidence" value="ECO:0007669"/>
    <property type="project" value="UniProtKB-SubCell"/>
</dbReference>
<dbReference type="GO" id="GO:0000287">
    <property type="term" value="F:magnesium ion binding"/>
    <property type="evidence" value="ECO:0007669"/>
    <property type="project" value="InterPro"/>
</dbReference>
<dbReference type="GO" id="GO:0004497">
    <property type="term" value="F:monooxygenase activity"/>
    <property type="evidence" value="ECO:0007669"/>
    <property type="project" value="UniProtKB-KW"/>
</dbReference>
<dbReference type="GO" id="GO:0016984">
    <property type="term" value="F:ribulose-bisphosphate carboxylase activity"/>
    <property type="evidence" value="ECO:0007669"/>
    <property type="project" value="UniProtKB-EC"/>
</dbReference>
<dbReference type="GO" id="GO:0009853">
    <property type="term" value="P:photorespiration"/>
    <property type="evidence" value="ECO:0007669"/>
    <property type="project" value="UniProtKB-KW"/>
</dbReference>
<dbReference type="GO" id="GO:0019253">
    <property type="term" value="P:reductive pentose-phosphate cycle"/>
    <property type="evidence" value="ECO:0007669"/>
    <property type="project" value="UniProtKB-KW"/>
</dbReference>
<dbReference type="CDD" id="cd08212">
    <property type="entry name" value="RuBisCO_large_I"/>
    <property type="match status" value="1"/>
</dbReference>
<dbReference type="FunFam" id="3.20.20.110:FF:000003">
    <property type="entry name" value="Ribulose bisphosphate carboxylase large chain"/>
    <property type="match status" value="1"/>
</dbReference>
<dbReference type="FunFam" id="3.30.70.150:FF:000001">
    <property type="entry name" value="Ribulose bisphosphate carboxylase large chain"/>
    <property type="match status" value="1"/>
</dbReference>
<dbReference type="Gene3D" id="3.20.20.110">
    <property type="entry name" value="Ribulose bisphosphate carboxylase, large subunit, C-terminal domain"/>
    <property type="match status" value="1"/>
</dbReference>
<dbReference type="Gene3D" id="3.30.70.150">
    <property type="entry name" value="RuBisCO large subunit, N-terminal domain"/>
    <property type="match status" value="1"/>
</dbReference>
<dbReference type="HAMAP" id="MF_01338">
    <property type="entry name" value="RuBisCO_L_type1"/>
    <property type="match status" value="1"/>
</dbReference>
<dbReference type="InterPro" id="IPR033966">
    <property type="entry name" value="RuBisCO"/>
</dbReference>
<dbReference type="InterPro" id="IPR020878">
    <property type="entry name" value="RuBisCo_large_chain_AS"/>
</dbReference>
<dbReference type="InterPro" id="IPR000685">
    <property type="entry name" value="RuBisCO_lsu_C"/>
</dbReference>
<dbReference type="InterPro" id="IPR036376">
    <property type="entry name" value="RuBisCO_lsu_C_sf"/>
</dbReference>
<dbReference type="InterPro" id="IPR017443">
    <property type="entry name" value="RuBisCO_lsu_fd_N"/>
</dbReference>
<dbReference type="InterPro" id="IPR036422">
    <property type="entry name" value="RuBisCO_lsu_N_sf"/>
</dbReference>
<dbReference type="InterPro" id="IPR020888">
    <property type="entry name" value="RuBisCO_lsuI"/>
</dbReference>
<dbReference type="NCBIfam" id="NF003252">
    <property type="entry name" value="PRK04208.1"/>
    <property type="match status" value="1"/>
</dbReference>
<dbReference type="PANTHER" id="PTHR42704">
    <property type="entry name" value="RIBULOSE BISPHOSPHATE CARBOXYLASE"/>
    <property type="match status" value="1"/>
</dbReference>
<dbReference type="PANTHER" id="PTHR42704:SF17">
    <property type="entry name" value="RIBULOSE BISPHOSPHATE CARBOXYLASE LARGE CHAIN"/>
    <property type="match status" value="1"/>
</dbReference>
<dbReference type="Pfam" id="PF00016">
    <property type="entry name" value="RuBisCO_large"/>
    <property type="match status" value="1"/>
</dbReference>
<dbReference type="Pfam" id="PF02788">
    <property type="entry name" value="RuBisCO_large_N"/>
    <property type="match status" value="1"/>
</dbReference>
<dbReference type="SFLD" id="SFLDG01052">
    <property type="entry name" value="RuBisCO"/>
    <property type="match status" value="1"/>
</dbReference>
<dbReference type="SFLD" id="SFLDS00014">
    <property type="entry name" value="RuBisCO"/>
    <property type="match status" value="1"/>
</dbReference>
<dbReference type="SFLD" id="SFLDG00301">
    <property type="entry name" value="RuBisCO-like_proteins"/>
    <property type="match status" value="1"/>
</dbReference>
<dbReference type="SUPFAM" id="SSF51649">
    <property type="entry name" value="RuBisCo, C-terminal domain"/>
    <property type="match status" value="1"/>
</dbReference>
<dbReference type="SUPFAM" id="SSF54966">
    <property type="entry name" value="RuBisCO, large subunit, small (N-terminal) domain"/>
    <property type="match status" value="1"/>
</dbReference>
<dbReference type="PROSITE" id="PS00157">
    <property type="entry name" value="RUBISCO_LARGE"/>
    <property type="match status" value="1"/>
</dbReference>
<sequence length="440" mass="48727">VGFKAGVKDYRLTYYTPGYKTKDTDILAAFRMTPQPGVPAEEAGAAVAAESSTGTWTTVWTDGXTSLDRYKGRCYDIEPVAGEENQYIAYVAYPLDLFEEGSVTNLFTSIVGNVFGFKALRALRLEDLRIPPAYSKTFIGPPHGIQVERDKLNKYGRPLLGCTIKPKLGLSAKNYGRAVYEYLRGGLDFTKDDENVNSQPFMRWRDRFLFVAEALFKSQAETGEIKGHYLNATAGTCEEMLKRAVFARELGAPIVMHDYLTGGFTANTSLAYYCRDNGLLLHIHRAMHAVIDRQRNHGIHFRVLAKALRMSGGDHIHAGTVVGKLEGEREVTLGFVDLLRDDYIEKDRSRGIYFTQDWVSMPGVHPVASGGIHVWHMPALTEIFGDDSVLQFGGGTLGHPWGNAPGAVANRVALEACVQARNEGRDLAREGNEVXREACK</sequence>
<name>RBL_POLMU</name>
<proteinExistence type="inferred from homology"/>
<reference key="1">
    <citation type="journal article" date="1994" name="Mol. Phylogenet. Evol.">
        <title>Phylogenetic relationships of dennstaedtioid ferns: evidence from rbcL sequences.</title>
        <authorList>
            <person name="Wolf P.G."/>
            <person name="Soltis P.S."/>
            <person name="Soltis D.E."/>
        </authorList>
    </citation>
    <scope>NUCLEOTIDE SEQUENCE [GENOMIC DNA]</scope>
    <source>
        <tissue>Leaf</tissue>
    </source>
</reference>
<accession>P48712</accession>